<proteinExistence type="inferred from homology"/>
<sequence length="157" mass="18899">MIVNYLKHKFYNLLTTMIVLFIFVLSGAIFLTFLGFGLYGLSRILIYFRLGDFTYNRSMYDNLLYYGSYIIFGYFIIFAVEHLMDYFRKMLPENAYFRGATFHLISYTVATTLFYFIIHLNYVYINIDFWVIMVIIGFLYVCKLQFYPESKNLNNRK</sequence>
<keyword id="KW-1003">Cell membrane</keyword>
<keyword id="KW-0472">Membrane</keyword>
<keyword id="KW-0812">Transmembrane</keyword>
<keyword id="KW-1133">Transmembrane helix</keyword>
<keyword id="KW-0813">Transport</keyword>
<feature type="chain" id="PRO_0000351494" description="Multidrug resistance efflux pump SepA">
    <location>
        <begin position="1"/>
        <end position="157"/>
    </location>
</feature>
<feature type="transmembrane region" description="Helical" evidence="2">
    <location>
        <begin position="18"/>
        <end position="38"/>
    </location>
</feature>
<feature type="transmembrane region" description="Helical" evidence="2">
    <location>
        <begin position="63"/>
        <end position="83"/>
    </location>
</feature>
<feature type="transmembrane region" description="Helical" evidence="2">
    <location>
        <begin position="100"/>
        <end position="120"/>
    </location>
</feature>
<feature type="transmembrane region" description="Helical" evidence="2">
    <location>
        <begin position="122"/>
        <end position="142"/>
    </location>
</feature>
<gene>
    <name type="primary">sepA</name>
    <name type="ordered locus">SAUSA300_2127</name>
</gene>
<comment type="function">
    <text evidence="1">Involved in multidrug efflux.</text>
</comment>
<comment type="subcellular location">
    <subcellularLocation>
        <location evidence="3">Cell membrane</location>
        <topology evidence="3">Multi-pass membrane protein</topology>
    </subcellularLocation>
</comment>
<comment type="similarity">
    <text evidence="3">Belongs to the multidrug resistance efflux pump SepA family.</text>
</comment>
<evidence type="ECO:0000250" key="1"/>
<evidence type="ECO:0000255" key="2"/>
<evidence type="ECO:0000305" key="3"/>
<protein>
    <recommendedName>
        <fullName>Multidrug resistance efflux pump SepA</fullName>
    </recommendedName>
    <alternativeName>
        <fullName>Antiseptic resistance protein SepA</fullName>
    </alternativeName>
    <alternativeName>
        <fullName>Staphylococcal efflux pump A</fullName>
    </alternativeName>
</protein>
<reference key="1">
    <citation type="journal article" date="2006" name="Lancet">
        <title>Complete genome sequence of USA300, an epidemic clone of community-acquired meticillin-resistant Staphylococcus aureus.</title>
        <authorList>
            <person name="Diep B.A."/>
            <person name="Gill S.R."/>
            <person name="Chang R.F."/>
            <person name="Phan T.H."/>
            <person name="Chen J.H."/>
            <person name="Davidson M.G."/>
            <person name="Lin F."/>
            <person name="Lin J."/>
            <person name="Carleton H.A."/>
            <person name="Mongodin E.F."/>
            <person name="Sensabaugh G.F."/>
            <person name="Perdreau-Remington F."/>
        </authorList>
    </citation>
    <scope>NUCLEOTIDE SEQUENCE [LARGE SCALE GENOMIC DNA]</scope>
    <source>
        <strain>USA300</strain>
    </source>
</reference>
<accession>Q2FEW4</accession>
<dbReference type="EMBL" id="CP000255">
    <property type="protein sequence ID" value="ABD22513.1"/>
    <property type="molecule type" value="Genomic_DNA"/>
</dbReference>
<dbReference type="RefSeq" id="WP_000636857.1">
    <property type="nucleotide sequence ID" value="NZ_CP027476.1"/>
</dbReference>
<dbReference type="KEGG" id="saa:SAUSA300_2127"/>
<dbReference type="HOGENOM" id="CLU_151983_0_0_9"/>
<dbReference type="OMA" id="ICKEVFY"/>
<dbReference type="Proteomes" id="UP000001939">
    <property type="component" value="Chromosome"/>
</dbReference>
<dbReference type="GO" id="GO:0005886">
    <property type="term" value="C:plasma membrane"/>
    <property type="evidence" value="ECO:0007669"/>
    <property type="project" value="UniProtKB-SubCell"/>
</dbReference>
<dbReference type="InterPro" id="IPR031396">
    <property type="entry name" value="SepA"/>
</dbReference>
<dbReference type="Pfam" id="PF17080">
    <property type="entry name" value="SepA"/>
    <property type="match status" value="1"/>
</dbReference>
<organism>
    <name type="scientific">Staphylococcus aureus (strain USA300)</name>
    <dbReference type="NCBI Taxonomy" id="367830"/>
    <lineage>
        <taxon>Bacteria</taxon>
        <taxon>Bacillati</taxon>
        <taxon>Bacillota</taxon>
        <taxon>Bacilli</taxon>
        <taxon>Bacillales</taxon>
        <taxon>Staphylococcaceae</taxon>
        <taxon>Staphylococcus</taxon>
    </lineage>
</organism>
<name>MDEP_STAA3</name>